<comment type="function">
    <text evidence="1">Catalyzes the attachment of serine to tRNA(Ser). Is also able to aminoacylate tRNA(Sec) with serine, to form the misacylated tRNA L-seryl-tRNA(Sec), which will be further converted into selenocysteinyl-tRNA(Sec).</text>
</comment>
<comment type="catalytic activity">
    <reaction evidence="1">
        <text>tRNA(Ser) + L-serine + ATP = L-seryl-tRNA(Ser) + AMP + diphosphate + H(+)</text>
        <dbReference type="Rhea" id="RHEA:12292"/>
        <dbReference type="Rhea" id="RHEA-COMP:9669"/>
        <dbReference type="Rhea" id="RHEA-COMP:9703"/>
        <dbReference type="ChEBI" id="CHEBI:15378"/>
        <dbReference type="ChEBI" id="CHEBI:30616"/>
        <dbReference type="ChEBI" id="CHEBI:33019"/>
        <dbReference type="ChEBI" id="CHEBI:33384"/>
        <dbReference type="ChEBI" id="CHEBI:78442"/>
        <dbReference type="ChEBI" id="CHEBI:78533"/>
        <dbReference type="ChEBI" id="CHEBI:456215"/>
        <dbReference type="EC" id="6.1.1.11"/>
    </reaction>
</comment>
<comment type="catalytic activity">
    <reaction evidence="1">
        <text>tRNA(Sec) + L-serine + ATP = L-seryl-tRNA(Sec) + AMP + diphosphate + H(+)</text>
        <dbReference type="Rhea" id="RHEA:42580"/>
        <dbReference type="Rhea" id="RHEA-COMP:9742"/>
        <dbReference type="Rhea" id="RHEA-COMP:10128"/>
        <dbReference type="ChEBI" id="CHEBI:15378"/>
        <dbReference type="ChEBI" id="CHEBI:30616"/>
        <dbReference type="ChEBI" id="CHEBI:33019"/>
        <dbReference type="ChEBI" id="CHEBI:33384"/>
        <dbReference type="ChEBI" id="CHEBI:78442"/>
        <dbReference type="ChEBI" id="CHEBI:78533"/>
        <dbReference type="ChEBI" id="CHEBI:456215"/>
        <dbReference type="EC" id="6.1.1.11"/>
    </reaction>
</comment>
<comment type="pathway">
    <text evidence="1">Aminoacyl-tRNA biosynthesis; selenocysteinyl-tRNA(Sec) biosynthesis; L-seryl-tRNA(Sec) from L-serine and tRNA(Sec): step 1/1.</text>
</comment>
<comment type="subunit">
    <text evidence="1">Homodimer. The tRNA molecule binds across the dimer.</text>
</comment>
<comment type="subcellular location">
    <subcellularLocation>
        <location evidence="1">Cytoplasm</location>
    </subcellularLocation>
</comment>
<comment type="domain">
    <text evidence="1">Consists of two distinct domains, a catalytic core and a N-terminal extension that is involved in tRNA binding.</text>
</comment>
<comment type="similarity">
    <text evidence="1">Belongs to the class-II aminoacyl-tRNA synthetase family. Type-1 seryl-tRNA synthetase subfamily.</text>
</comment>
<sequence>MLDLKRIRNNPEEIKQIMQNRGEDFDNKLIDDVVALDERRRQILVEVEQLKSKRNSESSQIGKLKKEGKDTSAIMADMKKLSDDIKAFDVELNEVDEKIKYIMLRIPNIPNPNVPDGETDEDNIEIRKWGEPTKFDFESKAHWDIGTDLDILDFERGGKIAGSRFTVYKGLGARLERAIINYFLDMHTIDHGYTEILPPYMVNRDSMTGTGQLPKFEEDAFKVENNGYFLIPTAEVPVTNMYRNEILNGDDLPIKHAAYSACFRAEAGSAGRDTRGLVRQHQFNKVELVKFVKPEQSYDELEKLTNDAEDVLKGLGLPYRVVRICKGDLGFTAALKYDIEVWMPSYNRYVEISSCSNFEDFQARRANIRYKENGKGKPEFIHTLNGSGVAIGRTVAAILENYQNEDGTVTIPEALRPYMRNLDVIK</sequence>
<keyword id="KW-0030">Aminoacyl-tRNA synthetase</keyword>
<keyword id="KW-0067">ATP-binding</keyword>
<keyword id="KW-0963">Cytoplasm</keyword>
<keyword id="KW-0436">Ligase</keyword>
<keyword id="KW-0547">Nucleotide-binding</keyword>
<keyword id="KW-0648">Protein biosynthesis</keyword>
<keyword id="KW-1185">Reference proteome</keyword>
<accession>A0Q3T2</accession>
<reference key="1">
    <citation type="journal article" date="2006" name="Nat. Biotechnol.">
        <title>The genome and transcriptomes of the anti-tumor agent Clostridium novyi-NT.</title>
        <authorList>
            <person name="Bettegowda C."/>
            <person name="Huang X."/>
            <person name="Lin J."/>
            <person name="Cheong I."/>
            <person name="Kohli M."/>
            <person name="Szabo S.A."/>
            <person name="Zhang X."/>
            <person name="Diaz L.A. Jr."/>
            <person name="Velculescu V.E."/>
            <person name="Parmigiani G."/>
            <person name="Kinzler K.W."/>
            <person name="Vogelstein B."/>
            <person name="Zhou S."/>
        </authorList>
    </citation>
    <scope>NUCLEOTIDE SEQUENCE [LARGE SCALE GENOMIC DNA]</scope>
    <source>
        <strain>NT</strain>
    </source>
</reference>
<proteinExistence type="inferred from homology"/>
<name>SYS_CLONN</name>
<protein>
    <recommendedName>
        <fullName evidence="1">Serine--tRNA ligase</fullName>
        <ecNumber evidence="1">6.1.1.11</ecNumber>
    </recommendedName>
    <alternativeName>
        <fullName evidence="1">Seryl-tRNA synthetase</fullName>
        <shortName evidence="1">SerRS</shortName>
    </alternativeName>
    <alternativeName>
        <fullName evidence="1">Seryl-tRNA(Ser/Sec) synthetase</fullName>
    </alternativeName>
</protein>
<gene>
    <name evidence="1" type="primary">serS</name>
    <name type="ordered locus">NT01CX_0848</name>
</gene>
<feature type="chain" id="PRO_1000019659" description="Serine--tRNA ligase">
    <location>
        <begin position="1"/>
        <end position="426"/>
    </location>
</feature>
<feature type="binding site" evidence="1">
    <location>
        <begin position="233"/>
        <end position="235"/>
    </location>
    <ligand>
        <name>L-serine</name>
        <dbReference type="ChEBI" id="CHEBI:33384"/>
    </ligand>
</feature>
<feature type="binding site" evidence="1">
    <location>
        <begin position="264"/>
        <end position="266"/>
    </location>
    <ligand>
        <name>ATP</name>
        <dbReference type="ChEBI" id="CHEBI:30616"/>
    </ligand>
</feature>
<feature type="binding site" evidence="1">
    <location>
        <position position="287"/>
    </location>
    <ligand>
        <name>L-serine</name>
        <dbReference type="ChEBI" id="CHEBI:33384"/>
    </ligand>
</feature>
<feature type="binding site" evidence="1">
    <location>
        <begin position="351"/>
        <end position="354"/>
    </location>
    <ligand>
        <name>ATP</name>
        <dbReference type="ChEBI" id="CHEBI:30616"/>
    </ligand>
</feature>
<feature type="binding site" evidence="1">
    <location>
        <position position="387"/>
    </location>
    <ligand>
        <name>L-serine</name>
        <dbReference type="ChEBI" id="CHEBI:33384"/>
    </ligand>
</feature>
<organism>
    <name type="scientific">Clostridium novyi (strain NT)</name>
    <dbReference type="NCBI Taxonomy" id="386415"/>
    <lineage>
        <taxon>Bacteria</taxon>
        <taxon>Bacillati</taxon>
        <taxon>Bacillota</taxon>
        <taxon>Clostridia</taxon>
        <taxon>Eubacteriales</taxon>
        <taxon>Clostridiaceae</taxon>
        <taxon>Clostridium</taxon>
    </lineage>
</organism>
<dbReference type="EC" id="6.1.1.11" evidence="1"/>
<dbReference type="EMBL" id="CP000382">
    <property type="protein sequence ID" value="ABK60975.1"/>
    <property type="molecule type" value="Genomic_DNA"/>
</dbReference>
<dbReference type="RefSeq" id="WP_011723256.1">
    <property type="nucleotide sequence ID" value="NC_008593.1"/>
</dbReference>
<dbReference type="SMR" id="A0Q3T2"/>
<dbReference type="STRING" id="386415.NT01CX_0848"/>
<dbReference type="KEGG" id="cno:NT01CX_0848"/>
<dbReference type="eggNOG" id="COG0172">
    <property type="taxonomic scope" value="Bacteria"/>
</dbReference>
<dbReference type="HOGENOM" id="CLU_023797_1_1_9"/>
<dbReference type="UniPathway" id="UPA00906">
    <property type="reaction ID" value="UER00895"/>
</dbReference>
<dbReference type="Proteomes" id="UP000008220">
    <property type="component" value="Chromosome"/>
</dbReference>
<dbReference type="GO" id="GO:0005737">
    <property type="term" value="C:cytoplasm"/>
    <property type="evidence" value="ECO:0007669"/>
    <property type="project" value="UniProtKB-SubCell"/>
</dbReference>
<dbReference type="GO" id="GO:0005524">
    <property type="term" value="F:ATP binding"/>
    <property type="evidence" value="ECO:0007669"/>
    <property type="project" value="UniProtKB-UniRule"/>
</dbReference>
<dbReference type="GO" id="GO:0140096">
    <property type="term" value="F:catalytic activity, acting on a protein"/>
    <property type="evidence" value="ECO:0007669"/>
    <property type="project" value="UniProtKB-ARBA"/>
</dbReference>
<dbReference type="GO" id="GO:0004828">
    <property type="term" value="F:serine-tRNA ligase activity"/>
    <property type="evidence" value="ECO:0007669"/>
    <property type="project" value="UniProtKB-UniRule"/>
</dbReference>
<dbReference type="GO" id="GO:0016740">
    <property type="term" value="F:transferase activity"/>
    <property type="evidence" value="ECO:0007669"/>
    <property type="project" value="UniProtKB-ARBA"/>
</dbReference>
<dbReference type="GO" id="GO:0016260">
    <property type="term" value="P:selenocysteine biosynthetic process"/>
    <property type="evidence" value="ECO:0007669"/>
    <property type="project" value="UniProtKB-UniRule"/>
</dbReference>
<dbReference type="GO" id="GO:0006434">
    <property type="term" value="P:seryl-tRNA aminoacylation"/>
    <property type="evidence" value="ECO:0007669"/>
    <property type="project" value="UniProtKB-UniRule"/>
</dbReference>
<dbReference type="CDD" id="cd00770">
    <property type="entry name" value="SerRS_core"/>
    <property type="match status" value="1"/>
</dbReference>
<dbReference type="Gene3D" id="3.30.930.10">
    <property type="entry name" value="Bira Bifunctional Protein, Domain 2"/>
    <property type="match status" value="1"/>
</dbReference>
<dbReference type="Gene3D" id="1.10.287.40">
    <property type="entry name" value="Serine-tRNA synthetase, tRNA binding domain"/>
    <property type="match status" value="1"/>
</dbReference>
<dbReference type="HAMAP" id="MF_00176">
    <property type="entry name" value="Ser_tRNA_synth_type1"/>
    <property type="match status" value="1"/>
</dbReference>
<dbReference type="InterPro" id="IPR002314">
    <property type="entry name" value="aa-tRNA-synt_IIb"/>
</dbReference>
<dbReference type="InterPro" id="IPR006195">
    <property type="entry name" value="aa-tRNA-synth_II"/>
</dbReference>
<dbReference type="InterPro" id="IPR045864">
    <property type="entry name" value="aa-tRNA-synth_II/BPL/LPL"/>
</dbReference>
<dbReference type="InterPro" id="IPR002317">
    <property type="entry name" value="Ser-tRNA-ligase_type_1"/>
</dbReference>
<dbReference type="InterPro" id="IPR015866">
    <property type="entry name" value="Ser-tRNA-synth_1_N"/>
</dbReference>
<dbReference type="InterPro" id="IPR042103">
    <property type="entry name" value="SerRS_1_N_sf"/>
</dbReference>
<dbReference type="InterPro" id="IPR033729">
    <property type="entry name" value="SerRS_core"/>
</dbReference>
<dbReference type="InterPro" id="IPR010978">
    <property type="entry name" value="tRNA-bd_arm"/>
</dbReference>
<dbReference type="NCBIfam" id="TIGR00414">
    <property type="entry name" value="serS"/>
    <property type="match status" value="1"/>
</dbReference>
<dbReference type="PANTHER" id="PTHR43697:SF1">
    <property type="entry name" value="SERINE--TRNA LIGASE"/>
    <property type="match status" value="1"/>
</dbReference>
<dbReference type="PANTHER" id="PTHR43697">
    <property type="entry name" value="SERYL-TRNA SYNTHETASE"/>
    <property type="match status" value="1"/>
</dbReference>
<dbReference type="Pfam" id="PF02403">
    <property type="entry name" value="Seryl_tRNA_N"/>
    <property type="match status" value="1"/>
</dbReference>
<dbReference type="Pfam" id="PF00587">
    <property type="entry name" value="tRNA-synt_2b"/>
    <property type="match status" value="1"/>
</dbReference>
<dbReference type="PIRSF" id="PIRSF001529">
    <property type="entry name" value="Ser-tRNA-synth_IIa"/>
    <property type="match status" value="1"/>
</dbReference>
<dbReference type="PRINTS" id="PR00981">
    <property type="entry name" value="TRNASYNTHSER"/>
</dbReference>
<dbReference type="SUPFAM" id="SSF55681">
    <property type="entry name" value="Class II aaRS and biotin synthetases"/>
    <property type="match status" value="1"/>
</dbReference>
<dbReference type="SUPFAM" id="SSF46589">
    <property type="entry name" value="tRNA-binding arm"/>
    <property type="match status" value="1"/>
</dbReference>
<dbReference type="PROSITE" id="PS50862">
    <property type="entry name" value="AA_TRNA_LIGASE_II"/>
    <property type="match status" value="1"/>
</dbReference>
<evidence type="ECO:0000255" key="1">
    <source>
        <dbReference type="HAMAP-Rule" id="MF_00176"/>
    </source>
</evidence>